<keyword id="KW-0256">Endoplasmic reticulum</keyword>
<keyword id="KW-0349">Heme</keyword>
<keyword id="KW-0408">Iron</keyword>
<keyword id="KW-0472">Membrane</keyword>
<keyword id="KW-0479">Metal-binding</keyword>
<keyword id="KW-0492">Microsome</keyword>
<keyword id="KW-0503">Monooxygenase</keyword>
<keyword id="KW-0560">Oxidoreductase</keyword>
<keyword id="KW-1185">Reference proteome</keyword>
<evidence type="ECO:0000250" key="1"/>
<evidence type="ECO:0000305" key="2"/>
<comment type="function">
    <text>Cytochromes P450 are a group of heme-thiolate monooxygenases. In liver microsomes, this enzyme is involved in an NADPH-dependent electron transport pathway. It oxidizes a variety of structurally unrelated compounds, including steroids, fatty acids, and xenobiotics.</text>
</comment>
<comment type="catalytic activity">
    <reaction>
        <text>an organic molecule + reduced [NADPH--hemoprotein reductase] + O2 = an alcohol + oxidized [NADPH--hemoprotein reductase] + H2O + H(+)</text>
        <dbReference type="Rhea" id="RHEA:17149"/>
        <dbReference type="Rhea" id="RHEA-COMP:11964"/>
        <dbReference type="Rhea" id="RHEA-COMP:11965"/>
        <dbReference type="ChEBI" id="CHEBI:15377"/>
        <dbReference type="ChEBI" id="CHEBI:15378"/>
        <dbReference type="ChEBI" id="CHEBI:15379"/>
        <dbReference type="ChEBI" id="CHEBI:30879"/>
        <dbReference type="ChEBI" id="CHEBI:57618"/>
        <dbReference type="ChEBI" id="CHEBI:58210"/>
        <dbReference type="ChEBI" id="CHEBI:142491"/>
        <dbReference type="EC" id="1.14.14.1"/>
    </reaction>
</comment>
<comment type="cofactor">
    <cofactor evidence="1">
        <name>heme</name>
        <dbReference type="ChEBI" id="CHEBI:30413"/>
    </cofactor>
</comment>
<comment type="subcellular location">
    <subcellularLocation>
        <location>Endoplasmic reticulum membrane</location>
        <topology>Peripheral membrane protein</topology>
    </subcellularLocation>
    <subcellularLocation>
        <location>Microsome membrane</location>
        <topology>Peripheral membrane protein</topology>
    </subcellularLocation>
</comment>
<comment type="induction">
    <text>P450 can be induced to high levels in liver and other tissues by various foreign compounds, including drugs, pesticides, and carcinogens.</text>
</comment>
<comment type="similarity">
    <text evidence="2">Belongs to the cytochrome P450 family.</text>
</comment>
<accession>P79401</accession>
<organism>
    <name type="scientific">Sus scrofa</name>
    <name type="common">Pig</name>
    <dbReference type="NCBI Taxonomy" id="9823"/>
    <lineage>
        <taxon>Eukaryota</taxon>
        <taxon>Metazoa</taxon>
        <taxon>Chordata</taxon>
        <taxon>Craniata</taxon>
        <taxon>Vertebrata</taxon>
        <taxon>Euteleostomi</taxon>
        <taxon>Mammalia</taxon>
        <taxon>Eutheria</taxon>
        <taxon>Laurasiatheria</taxon>
        <taxon>Artiodactyla</taxon>
        <taxon>Suina</taxon>
        <taxon>Suidae</taxon>
        <taxon>Sus</taxon>
    </lineage>
</organism>
<protein>
    <recommendedName>
        <fullName>Cytochrome P450 3A29</fullName>
        <ecNumber>1.14.14.1</ecNumber>
    </recommendedName>
    <alternativeName>
        <fullName>CYPIIIA29</fullName>
    </alternativeName>
</protein>
<proteinExistence type="evidence at transcript level"/>
<name>CP3AT_PIG</name>
<reference key="1">
    <citation type="journal article" date="1998" name="Anim. Genet.">
        <title>Mapping of porcine genes belonging to two different cytochrome P450 subfamilies.</title>
        <authorList>
            <person name="Nissen P.H."/>
            <person name="Winteroe A.K."/>
            <person name="Fredholm M."/>
        </authorList>
    </citation>
    <scope>NUCLEOTIDE SEQUENCE [MRNA]</scope>
    <source>
        <tissue>Small intestine</tissue>
    </source>
</reference>
<feature type="chain" id="PRO_0000051808" description="Cytochrome P450 3A29">
    <location>
        <begin position="1"/>
        <end position="503"/>
    </location>
</feature>
<feature type="binding site" description="axial binding residue" evidence="1">
    <location>
        <position position="442"/>
    </location>
    <ligand>
        <name>heme</name>
        <dbReference type="ChEBI" id="CHEBI:30413"/>
    </ligand>
    <ligandPart>
        <name>Fe</name>
        <dbReference type="ChEBI" id="CHEBI:18248"/>
    </ligandPart>
</feature>
<gene>
    <name type="primary">CYP3A29</name>
</gene>
<sequence>MDLIPGFSTETWVLLATSLVLLYLYGTYSHGLFKKLGIPGPRPLPYFGNILGYRKGVDHFDKKCFQQYGKMWGVYDGRQPLLAVTDPNMIKSVLVKECYSVFTNRRSFGPLGAMRNALSLAEDEEWKRIRTLLSPTFTSGKLKEMFPIISHYGDLLVSNLRKEAEKGKPVTMKDIFGAYSMDVITSTAFGVNIDSLNNPQDPFVENSKKLLKFSFFDPFLLSLIFFPFLTPIFEVLNITLFPKSSVNFFTKSVKRMKESRLTDQQKRRVDLLQLMINSQNSKEMDPHKSLSNEELVAQGIIFIFAGYETTSSALSLLAYELATHPDVQQKLQEEIEATFPNKAPPTYDALAQMEYLDMVVNETLRLYPIAARLERACKKDVEIHGVFVPKGTVVVVPVFVLHRDPDLWPEPEEFRPERFSKKHKDTINPYTYLPFGTGPRNCIGMRFALMNMKLALVRVLQNFSFKPCKETQIPLKLTTQGLTQPEKPVVLKILPRDGTVSGA</sequence>
<dbReference type="EC" id="1.14.14.1"/>
<dbReference type="EMBL" id="Z93099">
    <property type="protein sequence ID" value="CAB07513.1"/>
    <property type="molecule type" value="mRNA"/>
</dbReference>
<dbReference type="RefSeq" id="NP_999588.1">
    <property type="nucleotide sequence ID" value="NM_214423.1"/>
</dbReference>
<dbReference type="SMR" id="P79401"/>
<dbReference type="FunCoup" id="P79401">
    <property type="interactions" value="89"/>
</dbReference>
<dbReference type="STRING" id="9823.ENSSSCP00000022617"/>
<dbReference type="PeptideAtlas" id="P79401"/>
<dbReference type="Ensembl" id="ENSSSCT00090024006">
    <property type="protein sequence ID" value="ENSSSCP00090014806"/>
    <property type="gene ID" value="ENSSSCG00090013690"/>
</dbReference>
<dbReference type="GeneID" id="403324"/>
<dbReference type="KEGG" id="ssc:403324"/>
<dbReference type="CTD" id="403324"/>
<dbReference type="InParanoid" id="P79401"/>
<dbReference type="OrthoDB" id="1470350at2759"/>
<dbReference type="Proteomes" id="UP000008227">
    <property type="component" value="Unplaced"/>
</dbReference>
<dbReference type="Proteomes" id="UP000314985">
    <property type="component" value="Unplaced"/>
</dbReference>
<dbReference type="Proteomes" id="UP000694570">
    <property type="component" value="Unplaced"/>
</dbReference>
<dbReference type="Proteomes" id="UP000694571">
    <property type="component" value="Unplaced"/>
</dbReference>
<dbReference type="Proteomes" id="UP000694720">
    <property type="component" value="Unplaced"/>
</dbReference>
<dbReference type="Proteomes" id="UP000694722">
    <property type="component" value="Unplaced"/>
</dbReference>
<dbReference type="Proteomes" id="UP000694723">
    <property type="component" value="Unplaced"/>
</dbReference>
<dbReference type="Proteomes" id="UP000694724">
    <property type="component" value="Unplaced"/>
</dbReference>
<dbReference type="Proteomes" id="UP000694725">
    <property type="component" value="Unplaced"/>
</dbReference>
<dbReference type="Proteomes" id="UP000694726">
    <property type="component" value="Unplaced"/>
</dbReference>
<dbReference type="Proteomes" id="UP000694727">
    <property type="component" value="Unplaced"/>
</dbReference>
<dbReference type="Proteomes" id="UP000694728">
    <property type="component" value="Unplaced"/>
</dbReference>
<dbReference type="GO" id="GO:0005789">
    <property type="term" value="C:endoplasmic reticulum membrane"/>
    <property type="evidence" value="ECO:0007669"/>
    <property type="project" value="UniProtKB-SubCell"/>
</dbReference>
<dbReference type="GO" id="GO:0020037">
    <property type="term" value="F:heme binding"/>
    <property type="evidence" value="ECO:0007669"/>
    <property type="project" value="InterPro"/>
</dbReference>
<dbReference type="GO" id="GO:0005506">
    <property type="term" value="F:iron ion binding"/>
    <property type="evidence" value="ECO:0007669"/>
    <property type="project" value="InterPro"/>
</dbReference>
<dbReference type="GO" id="GO:0004497">
    <property type="term" value="F:monooxygenase activity"/>
    <property type="evidence" value="ECO:0000250"/>
    <property type="project" value="UniProtKB"/>
</dbReference>
<dbReference type="GO" id="GO:0016712">
    <property type="term" value="F:oxidoreductase activity, acting on paired donors, with incorporation or reduction of molecular oxygen, reduced flavin or flavoprotein as one donor, and incorporation of one atom of oxygen"/>
    <property type="evidence" value="ECO:0007669"/>
    <property type="project" value="UniProtKB-EC"/>
</dbReference>
<dbReference type="GO" id="GO:0050649">
    <property type="term" value="F:testosterone 6-beta-hydroxylase activity"/>
    <property type="evidence" value="ECO:0000318"/>
    <property type="project" value="GO_Central"/>
</dbReference>
<dbReference type="GO" id="GO:0071357">
    <property type="term" value="P:cellular response to type I interferon"/>
    <property type="evidence" value="ECO:0000315"/>
    <property type="project" value="AgBase"/>
</dbReference>
<dbReference type="GO" id="GO:0070989">
    <property type="term" value="P:oxidative demethylation"/>
    <property type="evidence" value="ECO:0000318"/>
    <property type="project" value="GO_Central"/>
</dbReference>
<dbReference type="GO" id="GO:0008202">
    <property type="term" value="P:steroid metabolic process"/>
    <property type="evidence" value="ECO:0000318"/>
    <property type="project" value="GO_Central"/>
</dbReference>
<dbReference type="CDD" id="cd20650">
    <property type="entry name" value="CYP3A"/>
    <property type="match status" value="1"/>
</dbReference>
<dbReference type="FunFam" id="1.10.630.10:FF:000096">
    <property type="entry name" value="Cytochrome P450 3A4"/>
    <property type="match status" value="1"/>
</dbReference>
<dbReference type="Gene3D" id="1.10.630.10">
    <property type="entry name" value="Cytochrome P450"/>
    <property type="match status" value="1"/>
</dbReference>
<dbReference type="InterPro" id="IPR001128">
    <property type="entry name" value="Cyt_P450"/>
</dbReference>
<dbReference type="InterPro" id="IPR017972">
    <property type="entry name" value="Cyt_P450_CS"/>
</dbReference>
<dbReference type="InterPro" id="IPR008072">
    <property type="entry name" value="Cyt_P450_E_CYP3A"/>
</dbReference>
<dbReference type="InterPro" id="IPR002402">
    <property type="entry name" value="Cyt_P450_E_grp-II"/>
</dbReference>
<dbReference type="InterPro" id="IPR036396">
    <property type="entry name" value="Cyt_P450_sf"/>
</dbReference>
<dbReference type="InterPro" id="IPR050705">
    <property type="entry name" value="Cytochrome_P450_3A"/>
</dbReference>
<dbReference type="PANTHER" id="PTHR24302:SF38">
    <property type="entry name" value="CYTOCHROME P450 3A5"/>
    <property type="match status" value="1"/>
</dbReference>
<dbReference type="PANTHER" id="PTHR24302">
    <property type="entry name" value="CYTOCHROME P450 FAMILY 3"/>
    <property type="match status" value="1"/>
</dbReference>
<dbReference type="Pfam" id="PF00067">
    <property type="entry name" value="p450"/>
    <property type="match status" value="1"/>
</dbReference>
<dbReference type="PRINTS" id="PR00464">
    <property type="entry name" value="EP450II"/>
</dbReference>
<dbReference type="PRINTS" id="PR01689">
    <property type="entry name" value="EP450IICYP3A"/>
</dbReference>
<dbReference type="PRINTS" id="PR00385">
    <property type="entry name" value="P450"/>
</dbReference>
<dbReference type="SUPFAM" id="SSF48264">
    <property type="entry name" value="Cytochrome P450"/>
    <property type="match status" value="1"/>
</dbReference>
<dbReference type="PROSITE" id="PS00086">
    <property type="entry name" value="CYTOCHROME_P450"/>
    <property type="match status" value="1"/>
</dbReference>